<comment type="function">
    <text evidence="1">Involved in the gluconeogenesis. Catalyzes stereospecifically the conversion of dihydroxyacetone phosphate (DHAP) to D-glyceraldehyde-3-phosphate (G3P).</text>
</comment>
<comment type="catalytic activity">
    <reaction evidence="1">
        <text>D-glyceraldehyde 3-phosphate = dihydroxyacetone phosphate</text>
        <dbReference type="Rhea" id="RHEA:18585"/>
        <dbReference type="ChEBI" id="CHEBI:57642"/>
        <dbReference type="ChEBI" id="CHEBI:59776"/>
        <dbReference type="EC" id="5.3.1.1"/>
    </reaction>
</comment>
<comment type="pathway">
    <text evidence="1">Carbohydrate biosynthesis; gluconeogenesis.</text>
</comment>
<comment type="pathway">
    <text evidence="1">Carbohydrate degradation; glycolysis; D-glyceraldehyde 3-phosphate from glycerone phosphate: step 1/1.</text>
</comment>
<comment type="subunit">
    <text evidence="1">Homodimer.</text>
</comment>
<comment type="subcellular location">
    <subcellularLocation>
        <location evidence="1">Cytoplasm</location>
    </subcellularLocation>
</comment>
<comment type="similarity">
    <text evidence="1">Belongs to the triosephosphate isomerase family.</text>
</comment>
<comment type="sequence caution" evidence="2">
    <conflict type="erroneous initiation">
        <sequence resource="EMBL-CDS" id="CAE19288"/>
    </conflict>
</comment>
<protein>
    <recommendedName>
        <fullName evidence="1">Triosephosphate isomerase</fullName>
        <shortName evidence="1">TIM</shortName>
        <shortName evidence="1">TPI</shortName>
        <ecNumber evidence="1">5.3.1.1</ecNumber>
    </recommendedName>
    <alternativeName>
        <fullName evidence="1">Triose-phosphate isomerase</fullName>
    </alternativeName>
</protein>
<keyword id="KW-0963">Cytoplasm</keyword>
<keyword id="KW-0312">Gluconeogenesis</keyword>
<keyword id="KW-0324">Glycolysis</keyword>
<keyword id="KW-0413">Isomerase</keyword>
<dbReference type="EC" id="5.3.1.1" evidence="1"/>
<dbReference type="EMBL" id="BX548174">
    <property type="protein sequence ID" value="CAE19288.1"/>
    <property type="status" value="ALT_INIT"/>
    <property type="molecule type" value="Genomic_DNA"/>
</dbReference>
<dbReference type="RefSeq" id="WP_011132463.1">
    <property type="nucleotide sequence ID" value="NC_005072.1"/>
</dbReference>
<dbReference type="SMR" id="Q7V1N4"/>
<dbReference type="STRING" id="59919.PMM0829"/>
<dbReference type="KEGG" id="pmm:PMM0829"/>
<dbReference type="eggNOG" id="COG0149">
    <property type="taxonomic scope" value="Bacteria"/>
</dbReference>
<dbReference type="HOGENOM" id="CLU_024251_2_3_3"/>
<dbReference type="OrthoDB" id="9809429at2"/>
<dbReference type="UniPathway" id="UPA00109">
    <property type="reaction ID" value="UER00189"/>
</dbReference>
<dbReference type="UniPathway" id="UPA00138"/>
<dbReference type="Proteomes" id="UP000001026">
    <property type="component" value="Chromosome"/>
</dbReference>
<dbReference type="GO" id="GO:0005829">
    <property type="term" value="C:cytosol"/>
    <property type="evidence" value="ECO:0007669"/>
    <property type="project" value="TreeGrafter"/>
</dbReference>
<dbReference type="GO" id="GO:0004807">
    <property type="term" value="F:triose-phosphate isomerase activity"/>
    <property type="evidence" value="ECO:0007669"/>
    <property type="project" value="UniProtKB-UniRule"/>
</dbReference>
<dbReference type="GO" id="GO:0006094">
    <property type="term" value="P:gluconeogenesis"/>
    <property type="evidence" value="ECO:0007669"/>
    <property type="project" value="UniProtKB-UniRule"/>
</dbReference>
<dbReference type="GO" id="GO:0046166">
    <property type="term" value="P:glyceraldehyde-3-phosphate biosynthetic process"/>
    <property type="evidence" value="ECO:0007669"/>
    <property type="project" value="TreeGrafter"/>
</dbReference>
<dbReference type="GO" id="GO:0019563">
    <property type="term" value="P:glycerol catabolic process"/>
    <property type="evidence" value="ECO:0007669"/>
    <property type="project" value="TreeGrafter"/>
</dbReference>
<dbReference type="GO" id="GO:0006096">
    <property type="term" value="P:glycolytic process"/>
    <property type="evidence" value="ECO:0007669"/>
    <property type="project" value="UniProtKB-UniRule"/>
</dbReference>
<dbReference type="CDD" id="cd00311">
    <property type="entry name" value="TIM"/>
    <property type="match status" value="1"/>
</dbReference>
<dbReference type="FunFam" id="3.20.20.70:FF:000016">
    <property type="entry name" value="Triosephosphate isomerase"/>
    <property type="match status" value="1"/>
</dbReference>
<dbReference type="Gene3D" id="3.20.20.70">
    <property type="entry name" value="Aldolase class I"/>
    <property type="match status" value="1"/>
</dbReference>
<dbReference type="HAMAP" id="MF_00147_B">
    <property type="entry name" value="TIM_B"/>
    <property type="match status" value="1"/>
</dbReference>
<dbReference type="InterPro" id="IPR013785">
    <property type="entry name" value="Aldolase_TIM"/>
</dbReference>
<dbReference type="InterPro" id="IPR035990">
    <property type="entry name" value="TIM_sf"/>
</dbReference>
<dbReference type="InterPro" id="IPR022896">
    <property type="entry name" value="TrioseP_Isoase_bac/euk"/>
</dbReference>
<dbReference type="InterPro" id="IPR000652">
    <property type="entry name" value="Triosephosphate_isomerase"/>
</dbReference>
<dbReference type="InterPro" id="IPR020861">
    <property type="entry name" value="Triosephosphate_isomerase_AS"/>
</dbReference>
<dbReference type="NCBIfam" id="TIGR00419">
    <property type="entry name" value="tim"/>
    <property type="match status" value="1"/>
</dbReference>
<dbReference type="PANTHER" id="PTHR21139">
    <property type="entry name" value="TRIOSEPHOSPHATE ISOMERASE"/>
    <property type="match status" value="1"/>
</dbReference>
<dbReference type="PANTHER" id="PTHR21139:SF42">
    <property type="entry name" value="TRIOSEPHOSPHATE ISOMERASE"/>
    <property type="match status" value="1"/>
</dbReference>
<dbReference type="Pfam" id="PF00121">
    <property type="entry name" value="TIM"/>
    <property type="match status" value="1"/>
</dbReference>
<dbReference type="SUPFAM" id="SSF51351">
    <property type="entry name" value="Triosephosphate isomerase (TIM)"/>
    <property type="match status" value="1"/>
</dbReference>
<dbReference type="PROSITE" id="PS00171">
    <property type="entry name" value="TIM_1"/>
    <property type="match status" value="1"/>
</dbReference>
<dbReference type="PROSITE" id="PS51440">
    <property type="entry name" value="TIM_2"/>
    <property type="match status" value="1"/>
</dbReference>
<feature type="chain" id="PRO_0000090267" description="Triosephosphate isomerase">
    <location>
        <begin position="1"/>
        <end position="241"/>
    </location>
</feature>
<feature type="active site" description="Electrophile" evidence="1">
    <location>
        <position position="96"/>
    </location>
</feature>
<feature type="active site" description="Proton acceptor" evidence="1">
    <location>
        <position position="165"/>
    </location>
</feature>
<feature type="binding site" evidence="1">
    <location>
        <begin position="9"/>
        <end position="11"/>
    </location>
    <ligand>
        <name>substrate</name>
    </ligand>
</feature>
<feature type="binding site" evidence="1">
    <location>
        <position position="171"/>
    </location>
    <ligand>
        <name>substrate</name>
    </ligand>
</feature>
<feature type="binding site" evidence="1">
    <location>
        <position position="204"/>
    </location>
    <ligand>
        <name>substrate</name>
    </ligand>
</feature>
<feature type="binding site" evidence="1">
    <location>
        <begin position="225"/>
        <end position="226"/>
    </location>
    <ligand>
        <name>substrate</name>
    </ligand>
</feature>
<organism>
    <name type="scientific">Prochlorococcus marinus subsp. pastoris (strain CCMP1986 / NIES-2087 / MED4)</name>
    <dbReference type="NCBI Taxonomy" id="59919"/>
    <lineage>
        <taxon>Bacteria</taxon>
        <taxon>Bacillati</taxon>
        <taxon>Cyanobacteriota</taxon>
        <taxon>Cyanophyceae</taxon>
        <taxon>Synechococcales</taxon>
        <taxon>Prochlorococcaceae</taxon>
        <taxon>Prochlorococcus</taxon>
    </lineage>
</organism>
<name>TPIS_PROMP</name>
<evidence type="ECO:0000255" key="1">
    <source>
        <dbReference type="HAMAP-Rule" id="MF_00147"/>
    </source>
</evidence>
<evidence type="ECO:0000305" key="2"/>
<accession>Q7V1N4</accession>
<proteinExistence type="inferred from homology"/>
<gene>
    <name evidence="1" type="primary">tpiA</name>
    <name type="synonym">tpi</name>
    <name type="ordered locus">PMM0829</name>
</gene>
<reference key="1">
    <citation type="journal article" date="2003" name="Nature">
        <title>Genome divergence in two Prochlorococcus ecotypes reflects oceanic niche differentiation.</title>
        <authorList>
            <person name="Rocap G."/>
            <person name="Larimer F.W."/>
            <person name="Lamerdin J.E."/>
            <person name="Malfatti S."/>
            <person name="Chain P."/>
            <person name="Ahlgren N.A."/>
            <person name="Arellano A."/>
            <person name="Coleman M."/>
            <person name="Hauser L."/>
            <person name="Hess W.R."/>
            <person name="Johnson Z.I."/>
            <person name="Land M.L."/>
            <person name="Lindell D."/>
            <person name="Post A.F."/>
            <person name="Regala W."/>
            <person name="Shah M."/>
            <person name="Shaw S.L."/>
            <person name="Steglich C."/>
            <person name="Sullivan M.B."/>
            <person name="Ting C.S."/>
            <person name="Tolonen A."/>
            <person name="Webb E.A."/>
            <person name="Zinser E.R."/>
            <person name="Chisholm S.W."/>
        </authorList>
    </citation>
    <scope>NUCLEOTIDE SEQUENCE [LARGE SCALE GENOMIC DNA]</scope>
    <source>
        <strain>CCMP1986 / NIES-2087 / MED4</strain>
    </source>
</reference>
<sequence length="241" mass="26828">MRKSVIAGNWKMHMTCADTKKYLEEFLPLIEEIPNDRKIVIAPPFTAISTFSNYTNFDYLNIASQNIHWEDKGAFTAEISPNMLIEHKVKYAIVGHSEPRKYFSESDEQINKRAVFAQSSGLTPIVCVGETLEQRERGEADRVITRQVEQGLENTDPSNLIVAYEPIWAIGTGKTCEASDANKICALIRSLIGFSDVIIQYGGSVKPNNIDEIMSMSDIDGVLVGGSSLDPISFSRIANFE</sequence>